<name>VP26_BPAPS</name>
<protein>
    <recommendedName>
        <fullName>Putative protein p26</fullName>
    </recommendedName>
</protein>
<proteinExistence type="predicted"/>
<gene>
    <name type="primary">26</name>
</gene>
<keyword id="KW-1185">Reference proteome</keyword>
<sequence>MPSSKDWGSTSILVASEAIPALRNANRTISPLVSGFVIVSPFPFFRFLGFLWCLYFVNRRHKAPFFELREIPCHYHRLDIPCCIIRPGKNTFSFHFHLDKKGTKAPTSS</sequence>
<organism>
    <name type="scientific">Acyrthosiphon pisum secondary endosymbiont phage 1</name>
    <name type="common">Bacteriophage APSE-1</name>
    <dbReference type="NCBI Taxonomy" id="2682836"/>
    <lineage>
        <taxon>Viruses</taxon>
        <taxon>Duplodnaviria</taxon>
        <taxon>Heunggongvirae</taxon>
        <taxon>Uroviricota</taxon>
        <taxon>Caudoviricetes</taxon>
        <taxon>Sendosyvirus</taxon>
        <taxon>Sendosyvirus APSE1</taxon>
    </lineage>
</organism>
<organismHost>
    <name type="scientific">Escherichia coli</name>
    <dbReference type="NCBI Taxonomy" id="562"/>
</organismHost>
<dbReference type="EMBL" id="AF157835">
    <property type="protein sequence ID" value="AAF03969.1"/>
    <property type="molecule type" value="Genomic_DNA"/>
</dbReference>
<dbReference type="RefSeq" id="NP_050987.1">
    <property type="nucleotide sequence ID" value="NC_000935.1"/>
</dbReference>
<dbReference type="KEGG" id="vg:1262320"/>
<dbReference type="Proteomes" id="UP000000853">
    <property type="component" value="Genome"/>
</dbReference>
<accession>Q9T1S2</accession>
<feature type="chain" id="PRO_0000077865" description="Putative protein p26">
    <location>
        <begin position="1"/>
        <end position="109"/>
    </location>
</feature>
<reference key="1">
    <citation type="journal article" date="1999" name="Virology">
        <title>Isolation and characterization of APSE-1, a bacteriophage infecting the secondary endosymbiont of acyrthosiphon pisum.</title>
        <authorList>
            <person name="van der Wilk F."/>
            <person name="Dullemans A.M."/>
            <person name="Verbeek M."/>
            <person name="van den Heuvel J.F.J.M."/>
        </authorList>
    </citation>
    <scope>NUCLEOTIDE SEQUENCE [LARGE SCALE GENOMIC DNA]</scope>
</reference>